<gene>
    <name evidence="1" type="primary">ubiA</name>
    <name type="ordered locus">SFV_4173</name>
</gene>
<organism>
    <name type="scientific">Shigella flexneri serotype 5b (strain 8401)</name>
    <dbReference type="NCBI Taxonomy" id="373384"/>
    <lineage>
        <taxon>Bacteria</taxon>
        <taxon>Pseudomonadati</taxon>
        <taxon>Pseudomonadota</taxon>
        <taxon>Gammaproteobacteria</taxon>
        <taxon>Enterobacterales</taxon>
        <taxon>Enterobacteriaceae</taxon>
        <taxon>Shigella</taxon>
    </lineage>
</organism>
<reference key="1">
    <citation type="journal article" date="2006" name="BMC Genomics">
        <title>Complete genome sequence of Shigella flexneri 5b and comparison with Shigella flexneri 2a.</title>
        <authorList>
            <person name="Nie H."/>
            <person name="Yang F."/>
            <person name="Zhang X."/>
            <person name="Yang J."/>
            <person name="Chen L."/>
            <person name="Wang J."/>
            <person name="Xiong Z."/>
            <person name="Peng J."/>
            <person name="Sun L."/>
            <person name="Dong J."/>
            <person name="Xue Y."/>
            <person name="Xu X."/>
            <person name="Chen S."/>
            <person name="Yao Z."/>
            <person name="Shen Y."/>
            <person name="Jin Q."/>
        </authorList>
    </citation>
    <scope>NUCLEOTIDE SEQUENCE [LARGE SCALE GENOMIC DNA]</scope>
    <source>
        <strain>8401</strain>
    </source>
</reference>
<protein>
    <recommendedName>
        <fullName evidence="1">4-hydroxybenzoate octaprenyltransferase</fullName>
        <ecNumber evidence="1">2.5.1.39</ecNumber>
    </recommendedName>
    <alternativeName>
        <fullName evidence="1">4-HB polyprenyltransferase</fullName>
    </alternativeName>
</protein>
<sequence>MEWSLTQNKLLAFHRLMRTDKPIGALLLLWPTLWALWVATPGVPQLWILAVFVAGVWLMRAAGCVVNDYADRKFDGHVKRTANRPLPSGAVTEKEARALFVVLVLISFLLVLTLNTMTILLSIAALALAWVYPFMKRYTHLPQVVLGAAFGWSIPMAFAAVSESVPLSCWLMFLANILWAVAYDTQYAMVDRDDDVKIGIKSTAILFGQYDKLIIGILQIGVLALMAIIGELNGLGWGYYWSIVVAGALFVYQQKLIANREREACFKAFMNNNYVGLVLFLGLAMSYWHF</sequence>
<evidence type="ECO:0000255" key="1">
    <source>
        <dbReference type="HAMAP-Rule" id="MF_01635"/>
    </source>
</evidence>
<dbReference type="EC" id="2.5.1.39" evidence="1"/>
<dbReference type="EMBL" id="CP000266">
    <property type="protein sequence ID" value="ABF06158.1"/>
    <property type="molecule type" value="Genomic_DNA"/>
</dbReference>
<dbReference type="RefSeq" id="WP_000455228.1">
    <property type="nucleotide sequence ID" value="NC_008258.1"/>
</dbReference>
<dbReference type="SMR" id="Q0SXQ7"/>
<dbReference type="GeneID" id="75204184"/>
<dbReference type="KEGG" id="sfv:SFV_4173"/>
<dbReference type="HOGENOM" id="CLU_034879_1_0_6"/>
<dbReference type="UniPathway" id="UPA00232"/>
<dbReference type="Proteomes" id="UP000000659">
    <property type="component" value="Chromosome"/>
</dbReference>
<dbReference type="GO" id="GO:0005886">
    <property type="term" value="C:plasma membrane"/>
    <property type="evidence" value="ECO:0007669"/>
    <property type="project" value="UniProtKB-SubCell"/>
</dbReference>
<dbReference type="GO" id="GO:0008412">
    <property type="term" value="F:4-hydroxybenzoate polyprenyltransferase activity"/>
    <property type="evidence" value="ECO:0007669"/>
    <property type="project" value="UniProtKB-UniRule"/>
</dbReference>
<dbReference type="GO" id="GO:0006744">
    <property type="term" value="P:ubiquinone biosynthetic process"/>
    <property type="evidence" value="ECO:0007669"/>
    <property type="project" value="UniProtKB-UniRule"/>
</dbReference>
<dbReference type="CDD" id="cd13959">
    <property type="entry name" value="PT_UbiA_COQ2"/>
    <property type="match status" value="1"/>
</dbReference>
<dbReference type="FunFam" id="1.10.357.140:FF:000002">
    <property type="entry name" value="4-hydroxybenzoate octaprenyltransferase"/>
    <property type="match status" value="1"/>
</dbReference>
<dbReference type="FunFam" id="1.20.120.1780:FF:000001">
    <property type="entry name" value="4-hydroxybenzoate octaprenyltransferase"/>
    <property type="match status" value="1"/>
</dbReference>
<dbReference type="Gene3D" id="1.10.357.140">
    <property type="entry name" value="UbiA prenyltransferase"/>
    <property type="match status" value="1"/>
</dbReference>
<dbReference type="Gene3D" id="1.20.120.1780">
    <property type="entry name" value="UbiA prenyltransferase"/>
    <property type="match status" value="1"/>
</dbReference>
<dbReference type="HAMAP" id="MF_01635">
    <property type="entry name" value="UbiA"/>
    <property type="match status" value="1"/>
</dbReference>
<dbReference type="InterPro" id="IPR006370">
    <property type="entry name" value="HB_polyprenyltransferase-like"/>
</dbReference>
<dbReference type="InterPro" id="IPR039653">
    <property type="entry name" value="Prenyltransferase"/>
</dbReference>
<dbReference type="InterPro" id="IPR000537">
    <property type="entry name" value="UbiA_prenyltransferase"/>
</dbReference>
<dbReference type="InterPro" id="IPR030470">
    <property type="entry name" value="UbiA_prenylTrfase_CS"/>
</dbReference>
<dbReference type="InterPro" id="IPR044878">
    <property type="entry name" value="UbiA_sf"/>
</dbReference>
<dbReference type="NCBIfam" id="TIGR01474">
    <property type="entry name" value="ubiA_proteo"/>
    <property type="match status" value="1"/>
</dbReference>
<dbReference type="PANTHER" id="PTHR11048:SF28">
    <property type="entry name" value="4-HYDROXYBENZOATE POLYPRENYLTRANSFERASE, MITOCHONDRIAL"/>
    <property type="match status" value="1"/>
</dbReference>
<dbReference type="PANTHER" id="PTHR11048">
    <property type="entry name" value="PRENYLTRANSFERASES"/>
    <property type="match status" value="1"/>
</dbReference>
<dbReference type="Pfam" id="PF01040">
    <property type="entry name" value="UbiA"/>
    <property type="match status" value="1"/>
</dbReference>
<dbReference type="PROSITE" id="PS00943">
    <property type="entry name" value="UBIA"/>
    <property type="match status" value="1"/>
</dbReference>
<accession>Q0SXQ7</accession>
<proteinExistence type="inferred from homology"/>
<keyword id="KW-0997">Cell inner membrane</keyword>
<keyword id="KW-1003">Cell membrane</keyword>
<keyword id="KW-0460">Magnesium</keyword>
<keyword id="KW-0472">Membrane</keyword>
<keyword id="KW-0808">Transferase</keyword>
<keyword id="KW-0812">Transmembrane</keyword>
<keyword id="KW-1133">Transmembrane helix</keyword>
<keyword id="KW-0831">Ubiquinone biosynthesis</keyword>
<feature type="chain" id="PRO_1000069835" description="4-hydroxybenzoate octaprenyltransferase">
    <location>
        <begin position="1"/>
        <end position="290"/>
    </location>
</feature>
<feature type="transmembrane region" description="Helical" evidence="1">
    <location>
        <begin position="23"/>
        <end position="43"/>
    </location>
</feature>
<feature type="transmembrane region" description="Helical" evidence="1">
    <location>
        <begin position="46"/>
        <end position="66"/>
    </location>
</feature>
<feature type="transmembrane region" description="Helical" evidence="1">
    <location>
        <begin position="99"/>
        <end position="119"/>
    </location>
</feature>
<feature type="transmembrane region" description="Helical" evidence="1">
    <location>
        <begin position="141"/>
        <end position="161"/>
    </location>
</feature>
<feature type="transmembrane region" description="Helical" evidence="1">
    <location>
        <begin position="163"/>
        <end position="183"/>
    </location>
</feature>
<feature type="transmembrane region" description="Helical" evidence="1">
    <location>
        <begin position="213"/>
        <end position="233"/>
    </location>
</feature>
<feature type="transmembrane region" description="Helical" evidence="1">
    <location>
        <begin position="234"/>
        <end position="254"/>
    </location>
</feature>
<feature type="transmembrane region" description="Helical" evidence="1">
    <location>
        <begin position="268"/>
        <end position="288"/>
    </location>
</feature>
<comment type="function">
    <text evidence="1">Catalyzes the prenylation of para-hydroxybenzoate (PHB) with an all-trans polyprenyl group. Mediates the second step in the final reaction sequence of ubiquinone-8 (UQ-8) biosynthesis, which is the condensation of the polyisoprenoid side chain with PHB, generating the first membrane-bound Q intermediate 3-octaprenyl-4-hydroxybenzoate.</text>
</comment>
<comment type="catalytic activity">
    <reaction evidence="1">
        <text>all-trans-octaprenyl diphosphate + 4-hydroxybenzoate = 4-hydroxy-3-(all-trans-octaprenyl)benzoate + diphosphate</text>
        <dbReference type="Rhea" id="RHEA:27782"/>
        <dbReference type="ChEBI" id="CHEBI:1617"/>
        <dbReference type="ChEBI" id="CHEBI:17879"/>
        <dbReference type="ChEBI" id="CHEBI:33019"/>
        <dbReference type="ChEBI" id="CHEBI:57711"/>
        <dbReference type="EC" id="2.5.1.39"/>
    </reaction>
</comment>
<comment type="cofactor">
    <cofactor evidence="1">
        <name>Mg(2+)</name>
        <dbReference type="ChEBI" id="CHEBI:18420"/>
    </cofactor>
</comment>
<comment type="pathway">
    <text evidence="1">Cofactor biosynthesis; ubiquinone biosynthesis.</text>
</comment>
<comment type="subcellular location">
    <subcellularLocation>
        <location evidence="1">Cell inner membrane</location>
        <topology evidence="1">Multi-pass membrane protein</topology>
    </subcellularLocation>
</comment>
<comment type="similarity">
    <text evidence="1">Belongs to the UbiA prenyltransferase family.</text>
</comment>
<name>UBIA_SHIF8</name>